<geneLocation type="mitochondrion"/>
<accession>Q5S589</accession>
<sequence length="89" mass="9907">MNFSIFLFLIGILGFVLNRKNIILMLISIEIMLLSITFLILISSLSFDDILGQTFAVYIITVAGAESAIGLGILVAYYRLRGSISIQYR</sequence>
<gene>
    <name type="primary">nd4L</name>
    <name type="synonym">nad4L</name>
</gene>
<comment type="function">
    <text evidence="1">Core subunit of the mitochondrial membrane respiratory chain NADH dehydrogenase (Complex I) that is believed to belong to the minimal assembly required for catalysis. Complex I functions in the transfer of electrons from NADH to the respiratory chain. The immediate electron acceptor for the enzyme is believed to be ubiquinone (By similarity).</text>
</comment>
<comment type="catalytic activity">
    <reaction>
        <text>a ubiquinone + NADH + 5 H(+)(in) = a ubiquinol + NAD(+) + 4 H(+)(out)</text>
        <dbReference type="Rhea" id="RHEA:29091"/>
        <dbReference type="Rhea" id="RHEA-COMP:9565"/>
        <dbReference type="Rhea" id="RHEA-COMP:9566"/>
        <dbReference type="ChEBI" id="CHEBI:15378"/>
        <dbReference type="ChEBI" id="CHEBI:16389"/>
        <dbReference type="ChEBI" id="CHEBI:17976"/>
        <dbReference type="ChEBI" id="CHEBI:57540"/>
        <dbReference type="ChEBI" id="CHEBI:57945"/>
        <dbReference type="EC" id="7.1.1.2"/>
    </reaction>
</comment>
<comment type="subcellular location">
    <subcellularLocation>
        <location evidence="1">Mitochondrion membrane</location>
        <topology evidence="1">Multi-pass membrane protein</topology>
    </subcellularLocation>
</comment>
<comment type="similarity">
    <text evidence="3">Belongs to the complex I subunit 4L family.</text>
</comment>
<organism>
    <name type="scientific">Aspergillus tubingensis</name>
    <dbReference type="NCBI Taxonomy" id="5068"/>
    <lineage>
        <taxon>Eukaryota</taxon>
        <taxon>Fungi</taxon>
        <taxon>Dikarya</taxon>
        <taxon>Ascomycota</taxon>
        <taxon>Pezizomycotina</taxon>
        <taxon>Eurotiomycetes</taxon>
        <taxon>Eurotiomycetidae</taxon>
        <taxon>Eurotiales</taxon>
        <taxon>Aspergillaceae</taxon>
        <taxon>Aspergillus</taxon>
        <taxon>Aspergillus subgen. Circumdati</taxon>
    </lineage>
</organism>
<feature type="chain" id="PRO_0000118391" description="NADH-ubiquinone oxidoreductase chain 4L">
    <location>
        <begin position="1"/>
        <end position="89"/>
    </location>
</feature>
<feature type="transmembrane region" description="Helical" evidence="2">
    <location>
        <begin position="1"/>
        <end position="21"/>
    </location>
</feature>
<feature type="transmembrane region" description="Helical" evidence="2">
    <location>
        <begin position="22"/>
        <end position="42"/>
    </location>
</feature>
<feature type="transmembrane region" description="Helical" evidence="2">
    <location>
        <begin position="55"/>
        <end position="75"/>
    </location>
</feature>
<dbReference type="EC" id="7.1.1.2"/>
<dbReference type="EMBL" id="AH014507">
    <property type="protein sequence ID" value="AAV66910.1"/>
    <property type="molecule type" value="Genomic_DNA"/>
</dbReference>
<dbReference type="RefSeq" id="YP_398780.1">
    <property type="nucleotide sequence ID" value="NC_007597.1"/>
</dbReference>
<dbReference type="SMR" id="Q5S589"/>
<dbReference type="GeneID" id="3772909"/>
<dbReference type="GO" id="GO:0031966">
    <property type="term" value="C:mitochondrial membrane"/>
    <property type="evidence" value="ECO:0007669"/>
    <property type="project" value="UniProtKB-SubCell"/>
</dbReference>
<dbReference type="GO" id="GO:0030964">
    <property type="term" value="C:NADH dehydrogenase complex"/>
    <property type="evidence" value="ECO:0007669"/>
    <property type="project" value="TreeGrafter"/>
</dbReference>
<dbReference type="GO" id="GO:0008137">
    <property type="term" value="F:NADH dehydrogenase (ubiquinone) activity"/>
    <property type="evidence" value="ECO:0007669"/>
    <property type="project" value="UniProtKB-EC"/>
</dbReference>
<dbReference type="GO" id="GO:0042773">
    <property type="term" value="P:ATP synthesis coupled electron transport"/>
    <property type="evidence" value="ECO:0007669"/>
    <property type="project" value="InterPro"/>
</dbReference>
<dbReference type="FunFam" id="1.10.287.3510:FF:000004">
    <property type="entry name" value="NADH-ubiquinone oxidoreductase chain 4L"/>
    <property type="match status" value="1"/>
</dbReference>
<dbReference type="Gene3D" id="1.10.287.3510">
    <property type="match status" value="1"/>
</dbReference>
<dbReference type="InterPro" id="IPR001133">
    <property type="entry name" value="NADH_UbQ_OxRdtase_chain4L/K"/>
</dbReference>
<dbReference type="InterPro" id="IPR039428">
    <property type="entry name" value="NUOK/Mnh_C1-like"/>
</dbReference>
<dbReference type="NCBIfam" id="NF004320">
    <property type="entry name" value="PRK05715.1-2"/>
    <property type="match status" value="1"/>
</dbReference>
<dbReference type="PANTHER" id="PTHR11434:SF16">
    <property type="entry name" value="NADH-UBIQUINONE OXIDOREDUCTASE CHAIN 4L"/>
    <property type="match status" value="1"/>
</dbReference>
<dbReference type="PANTHER" id="PTHR11434">
    <property type="entry name" value="NADH-UBIQUINONE OXIDOREDUCTASE SUBUNIT ND4L"/>
    <property type="match status" value="1"/>
</dbReference>
<dbReference type="Pfam" id="PF00420">
    <property type="entry name" value="Oxidored_q2"/>
    <property type="match status" value="1"/>
</dbReference>
<name>NU4LM_ASPTU</name>
<evidence type="ECO:0000250" key="1"/>
<evidence type="ECO:0000255" key="2"/>
<evidence type="ECO:0000305" key="3"/>
<protein>
    <recommendedName>
        <fullName>NADH-ubiquinone oxidoreductase chain 4L</fullName>
        <ecNumber>7.1.1.2</ecNumber>
    </recommendedName>
    <alternativeName>
        <fullName>NADH dehydrogenase subunit 4L</fullName>
    </alternativeName>
</protein>
<reference key="1">
    <citation type="journal article" date="2004" name="FEMS Microbiol. Lett.">
        <title>Mitochondrial DNA organisation of the mtDNA type 2b of Aspergillus tubingensis compared to the Aspergillus niger mtDNA type 1a.</title>
        <authorList>
            <person name="Juhasz A."/>
            <person name="Laday M."/>
            <person name="Gacser A."/>
            <person name="Kucsera J."/>
            <person name="Pfeiffer I."/>
            <person name="Kevei F."/>
            <person name="Hamari Z."/>
        </authorList>
    </citation>
    <scope>NUCLEOTIDE SEQUENCE [GENOMIC DNA]</scope>
    <source>
        <strain>0932</strain>
    </source>
</reference>
<proteinExistence type="inferred from homology"/>
<keyword id="KW-0249">Electron transport</keyword>
<keyword id="KW-0472">Membrane</keyword>
<keyword id="KW-0496">Mitochondrion</keyword>
<keyword id="KW-0520">NAD</keyword>
<keyword id="KW-0679">Respiratory chain</keyword>
<keyword id="KW-1278">Translocase</keyword>
<keyword id="KW-0812">Transmembrane</keyword>
<keyword id="KW-1133">Transmembrane helix</keyword>
<keyword id="KW-0813">Transport</keyword>
<keyword id="KW-0830">Ubiquinone</keyword>